<proteinExistence type="inferred from homology"/>
<gene>
    <name evidence="1" type="primary">proS</name>
    <name type="ordered locus">RPD_2865</name>
</gene>
<accession>Q135Z6</accession>
<feature type="chain" id="PRO_0000288401" description="Proline--tRNA ligase">
    <location>
        <begin position="1"/>
        <end position="439"/>
    </location>
</feature>
<name>SYP_RHOPS</name>
<sequence length="439" mass="49244">MRLSRFFLPILKENPKEAEIVSHRLMLRAGMLRQEAAGIYAWLPLGHRVLKKIEQIVREEQNRAGAIELLMPTLQLADLWRESGRYDAYGPEMLRIADRHKRELLYGPTNEEMITEIFRAYVKSYKSLPLNLYHIQWKFRDEQRPRFGVMRGREFLMKDAYSFDVDEAAARKSYNRMFVAYLRTFARMGLKAIPMRAETGPIGGDLSHEFIVLAETGESGVYCDRDVLNLPVPGEDVDYDGDLTPIIQQWTSVYAATEDVHDAARYESEVPEANRLNTRGIEVGQIFYFGTKYSDSMKANVAGPDGADAPIHGGSYGVGVSRLVGAIIEACHDENGIKWPEEVAPFRVAILNLKQGDAQTDAACEQLYRELAAKGVDVLYDDTDQRAGAKFATADLIGIPWQVLVGPKGLADGKVELKRRSDGSRETIALAEAVARLAP</sequence>
<evidence type="ECO:0000255" key="1">
    <source>
        <dbReference type="HAMAP-Rule" id="MF_01570"/>
    </source>
</evidence>
<organism>
    <name type="scientific">Rhodopseudomonas palustris (strain BisB5)</name>
    <dbReference type="NCBI Taxonomy" id="316057"/>
    <lineage>
        <taxon>Bacteria</taxon>
        <taxon>Pseudomonadati</taxon>
        <taxon>Pseudomonadota</taxon>
        <taxon>Alphaproteobacteria</taxon>
        <taxon>Hyphomicrobiales</taxon>
        <taxon>Nitrobacteraceae</taxon>
        <taxon>Rhodopseudomonas</taxon>
    </lineage>
</organism>
<dbReference type="EC" id="6.1.1.15" evidence="1"/>
<dbReference type="EMBL" id="CP000283">
    <property type="protein sequence ID" value="ABE40093.1"/>
    <property type="molecule type" value="Genomic_DNA"/>
</dbReference>
<dbReference type="SMR" id="Q135Z6"/>
<dbReference type="STRING" id="316057.RPD_2865"/>
<dbReference type="KEGG" id="rpd:RPD_2865"/>
<dbReference type="eggNOG" id="COG0442">
    <property type="taxonomic scope" value="Bacteria"/>
</dbReference>
<dbReference type="HOGENOM" id="CLU_016739_4_2_5"/>
<dbReference type="BioCyc" id="RPAL316057:RPD_RS14395-MONOMER"/>
<dbReference type="Proteomes" id="UP000001818">
    <property type="component" value="Chromosome"/>
</dbReference>
<dbReference type="GO" id="GO:0005829">
    <property type="term" value="C:cytosol"/>
    <property type="evidence" value="ECO:0007669"/>
    <property type="project" value="TreeGrafter"/>
</dbReference>
<dbReference type="GO" id="GO:0005524">
    <property type="term" value="F:ATP binding"/>
    <property type="evidence" value="ECO:0007669"/>
    <property type="project" value="UniProtKB-UniRule"/>
</dbReference>
<dbReference type="GO" id="GO:0004827">
    <property type="term" value="F:proline-tRNA ligase activity"/>
    <property type="evidence" value="ECO:0007669"/>
    <property type="project" value="UniProtKB-UniRule"/>
</dbReference>
<dbReference type="GO" id="GO:0006433">
    <property type="term" value="P:prolyl-tRNA aminoacylation"/>
    <property type="evidence" value="ECO:0007669"/>
    <property type="project" value="UniProtKB-UniRule"/>
</dbReference>
<dbReference type="CDD" id="cd00861">
    <property type="entry name" value="ProRS_anticodon_short"/>
    <property type="match status" value="1"/>
</dbReference>
<dbReference type="CDD" id="cd00779">
    <property type="entry name" value="ProRS_core_prok"/>
    <property type="match status" value="1"/>
</dbReference>
<dbReference type="FunFam" id="3.30.930.10:FF:000042">
    <property type="entry name" value="probable proline--tRNA ligase, mitochondrial"/>
    <property type="match status" value="1"/>
</dbReference>
<dbReference type="FunFam" id="3.40.50.800:FF:000032">
    <property type="entry name" value="Proline--tRNA ligase"/>
    <property type="match status" value="1"/>
</dbReference>
<dbReference type="Gene3D" id="3.40.50.800">
    <property type="entry name" value="Anticodon-binding domain"/>
    <property type="match status" value="1"/>
</dbReference>
<dbReference type="Gene3D" id="3.30.930.10">
    <property type="entry name" value="Bira Bifunctional Protein, Domain 2"/>
    <property type="match status" value="1"/>
</dbReference>
<dbReference type="HAMAP" id="MF_01570">
    <property type="entry name" value="Pro_tRNA_synth_type2"/>
    <property type="match status" value="1"/>
</dbReference>
<dbReference type="InterPro" id="IPR002314">
    <property type="entry name" value="aa-tRNA-synt_IIb"/>
</dbReference>
<dbReference type="InterPro" id="IPR006195">
    <property type="entry name" value="aa-tRNA-synth_II"/>
</dbReference>
<dbReference type="InterPro" id="IPR045864">
    <property type="entry name" value="aa-tRNA-synth_II/BPL/LPL"/>
</dbReference>
<dbReference type="InterPro" id="IPR004154">
    <property type="entry name" value="Anticodon-bd"/>
</dbReference>
<dbReference type="InterPro" id="IPR036621">
    <property type="entry name" value="Anticodon-bd_dom_sf"/>
</dbReference>
<dbReference type="InterPro" id="IPR002316">
    <property type="entry name" value="Pro-tRNA-ligase_IIa"/>
</dbReference>
<dbReference type="InterPro" id="IPR004500">
    <property type="entry name" value="Pro-tRNA-synth_IIa_bac-type"/>
</dbReference>
<dbReference type="InterPro" id="IPR050062">
    <property type="entry name" value="Pro-tRNA_synthetase"/>
</dbReference>
<dbReference type="InterPro" id="IPR023716">
    <property type="entry name" value="Prolyl-tRNA_ligase_IIa_type2"/>
</dbReference>
<dbReference type="InterPro" id="IPR044140">
    <property type="entry name" value="ProRS_anticodon_short"/>
</dbReference>
<dbReference type="InterPro" id="IPR033730">
    <property type="entry name" value="ProRS_core_prok"/>
</dbReference>
<dbReference type="NCBIfam" id="NF008979">
    <property type="entry name" value="PRK12325.1"/>
    <property type="match status" value="1"/>
</dbReference>
<dbReference type="NCBIfam" id="TIGR00409">
    <property type="entry name" value="proS_fam_II"/>
    <property type="match status" value="1"/>
</dbReference>
<dbReference type="PANTHER" id="PTHR42753">
    <property type="entry name" value="MITOCHONDRIAL RIBOSOME PROTEIN L39/PROLYL-TRNA LIGASE FAMILY MEMBER"/>
    <property type="match status" value="1"/>
</dbReference>
<dbReference type="PANTHER" id="PTHR42753:SF2">
    <property type="entry name" value="PROLINE--TRNA LIGASE"/>
    <property type="match status" value="1"/>
</dbReference>
<dbReference type="Pfam" id="PF03129">
    <property type="entry name" value="HGTP_anticodon"/>
    <property type="match status" value="1"/>
</dbReference>
<dbReference type="Pfam" id="PF00587">
    <property type="entry name" value="tRNA-synt_2b"/>
    <property type="match status" value="1"/>
</dbReference>
<dbReference type="PRINTS" id="PR01046">
    <property type="entry name" value="TRNASYNTHPRO"/>
</dbReference>
<dbReference type="SUPFAM" id="SSF52954">
    <property type="entry name" value="Class II aaRS ABD-related"/>
    <property type="match status" value="1"/>
</dbReference>
<dbReference type="SUPFAM" id="SSF55681">
    <property type="entry name" value="Class II aaRS and biotin synthetases"/>
    <property type="match status" value="1"/>
</dbReference>
<dbReference type="PROSITE" id="PS50862">
    <property type="entry name" value="AA_TRNA_LIGASE_II"/>
    <property type="match status" value="1"/>
</dbReference>
<keyword id="KW-0030">Aminoacyl-tRNA synthetase</keyword>
<keyword id="KW-0067">ATP-binding</keyword>
<keyword id="KW-0963">Cytoplasm</keyword>
<keyword id="KW-0436">Ligase</keyword>
<keyword id="KW-0547">Nucleotide-binding</keyword>
<keyword id="KW-0648">Protein biosynthesis</keyword>
<protein>
    <recommendedName>
        <fullName evidence="1">Proline--tRNA ligase</fullName>
        <ecNumber evidence="1">6.1.1.15</ecNumber>
    </recommendedName>
    <alternativeName>
        <fullName evidence="1">Prolyl-tRNA synthetase</fullName>
        <shortName evidence="1">ProRS</shortName>
    </alternativeName>
</protein>
<comment type="function">
    <text evidence="1">Catalyzes the attachment of proline to tRNA(Pro) in a two-step reaction: proline is first activated by ATP to form Pro-AMP and then transferred to the acceptor end of tRNA(Pro).</text>
</comment>
<comment type="catalytic activity">
    <reaction evidence="1">
        <text>tRNA(Pro) + L-proline + ATP = L-prolyl-tRNA(Pro) + AMP + diphosphate</text>
        <dbReference type="Rhea" id="RHEA:14305"/>
        <dbReference type="Rhea" id="RHEA-COMP:9700"/>
        <dbReference type="Rhea" id="RHEA-COMP:9702"/>
        <dbReference type="ChEBI" id="CHEBI:30616"/>
        <dbReference type="ChEBI" id="CHEBI:33019"/>
        <dbReference type="ChEBI" id="CHEBI:60039"/>
        <dbReference type="ChEBI" id="CHEBI:78442"/>
        <dbReference type="ChEBI" id="CHEBI:78532"/>
        <dbReference type="ChEBI" id="CHEBI:456215"/>
        <dbReference type="EC" id="6.1.1.15"/>
    </reaction>
</comment>
<comment type="subunit">
    <text evidence="1">Homodimer.</text>
</comment>
<comment type="subcellular location">
    <subcellularLocation>
        <location evidence="1">Cytoplasm</location>
    </subcellularLocation>
</comment>
<comment type="similarity">
    <text evidence="1">Belongs to the class-II aminoacyl-tRNA synthetase family. ProS type 2 subfamily.</text>
</comment>
<reference key="1">
    <citation type="submission" date="2006-03" db="EMBL/GenBank/DDBJ databases">
        <title>Complete sequence of Rhodopseudomonas palustris BisB5.</title>
        <authorList>
            <consortium name="US DOE Joint Genome Institute"/>
            <person name="Copeland A."/>
            <person name="Lucas S."/>
            <person name="Lapidus A."/>
            <person name="Barry K."/>
            <person name="Detter J.C."/>
            <person name="Glavina del Rio T."/>
            <person name="Hammon N."/>
            <person name="Israni S."/>
            <person name="Dalin E."/>
            <person name="Tice H."/>
            <person name="Pitluck S."/>
            <person name="Chain P."/>
            <person name="Malfatti S."/>
            <person name="Shin M."/>
            <person name="Vergez L."/>
            <person name="Schmutz J."/>
            <person name="Larimer F."/>
            <person name="Land M."/>
            <person name="Hauser L."/>
            <person name="Pelletier D.A."/>
            <person name="Kyrpides N."/>
            <person name="Lykidis A."/>
            <person name="Oda Y."/>
            <person name="Harwood C.S."/>
            <person name="Richardson P."/>
        </authorList>
    </citation>
    <scope>NUCLEOTIDE SEQUENCE [LARGE SCALE GENOMIC DNA]</scope>
    <source>
        <strain>BisB5</strain>
    </source>
</reference>